<name>ATPG_DESOH</name>
<evidence type="ECO:0000255" key="1">
    <source>
        <dbReference type="HAMAP-Rule" id="MF_00815"/>
    </source>
</evidence>
<accession>A8ZUA0</accession>
<protein>
    <recommendedName>
        <fullName evidence="1">ATP synthase gamma chain</fullName>
    </recommendedName>
    <alternativeName>
        <fullName evidence="1">ATP synthase F1 sector gamma subunit</fullName>
    </alternativeName>
    <alternativeName>
        <fullName evidence="1">F-ATPase gamma subunit</fullName>
    </alternativeName>
</protein>
<proteinExistence type="inferred from homology"/>
<feature type="chain" id="PRO_1000134138" description="ATP synthase gamma chain">
    <location>
        <begin position="1"/>
        <end position="298"/>
    </location>
</feature>
<dbReference type="EMBL" id="CP000859">
    <property type="protein sequence ID" value="ABW66412.1"/>
    <property type="molecule type" value="Genomic_DNA"/>
</dbReference>
<dbReference type="RefSeq" id="WP_012174031.1">
    <property type="nucleotide sequence ID" value="NC_009943.1"/>
</dbReference>
<dbReference type="SMR" id="A8ZUA0"/>
<dbReference type="STRING" id="96561.Dole_0602"/>
<dbReference type="KEGG" id="dol:Dole_0602"/>
<dbReference type="eggNOG" id="COG0224">
    <property type="taxonomic scope" value="Bacteria"/>
</dbReference>
<dbReference type="HOGENOM" id="CLU_050669_0_1_7"/>
<dbReference type="OrthoDB" id="9812769at2"/>
<dbReference type="Proteomes" id="UP000008561">
    <property type="component" value="Chromosome"/>
</dbReference>
<dbReference type="GO" id="GO:0005886">
    <property type="term" value="C:plasma membrane"/>
    <property type="evidence" value="ECO:0007669"/>
    <property type="project" value="UniProtKB-SubCell"/>
</dbReference>
<dbReference type="GO" id="GO:0045259">
    <property type="term" value="C:proton-transporting ATP synthase complex"/>
    <property type="evidence" value="ECO:0007669"/>
    <property type="project" value="UniProtKB-KW"/>
</dbReference>
<dbReference type="GO" id="GO:0005524">
    <property type="term" value="F:ATP binding"/>
    <property type="evidence" value="ECO:0007669"/>
    <property type="project" value="UniProtKB-UniRule"/>
</dbReference>
<dbReference type="GO" id="GO:0046933">
    <property type="term" value="F:proton-transporting ATP synthase activity, rotational mechanism"/>
    <property type="evidence" value="ECO:0007669"/>
    <property type="project" value="UniProtKB-UniRule"/>
</dbReference>
<dbReference type="GO" id="GO:0042777">
    <property type="term" value="P:proton motive force-driven plasma membrane ATP synthesis"/>
    <property type="evidence" value="ECO:0007669"/>
    <property type="project" value="UniProtKB-UniRule"/>
</dbReference>
<dbReference type="CDD" id="cd12151">
    <property type="entry name" value="F1-ATPase_gamma"/>
    <property type="match status" value="1"/>
</dbReference>
<dbReference type="Gene3D" id="3.40.1380.10">
    <property type="match status" value="1"/>
</dbReference>
<dbReference type="Gene3D" id="1.10.287.80">
    <property type="entry name" value="ATP synthase, gamma subunit, helix hairpin domain"/>
    <property type="match status" value="2"/>
</dbReference>
<dbReference type="HAMAP" id="MF_00815">
    <property type="entry name" value="ATP_synth_gamma_bact"/>
    <property type="match status" value="1"/>
</dbReference>
<dbReference type="InterPro" id="IPR035968">
    <property type="entry name" value="ATP_synth_F1_ATPase_gsu"/>
</dbReference>
<dbReference type="InterPro" id="IPR000131">
    <property type="entry name" value="ATP_synth_F1_gsu"/>
</dbReference>
<dbReference type="InterPro" id="IPR023632">
    <property type="entry name" value="ATP_synth_F1_gsu_CS"/>
</dbReference>
<dbReference type="NCBIfam" id="TIGR01146">
    <property type="entry name" value="ATPsyn_F1gamma"/>
    <property type="match status" value="1"/>
</dbReference>
<dbReference type="PANTHER" id="PTHR11693">
    <property type="entry name" value="ATP SYNTHASE GAMMA CHAIN"/>
    <property type="match status" value="1"/>
</dbReference>
<dbReference type="PANTHER" id="PTHR11693:SF22">
    <property type="entry name" value="ATP SYNTHASE SUBUNIT GAMMA, MITOCHONDRIAL"/>
    <property type="match status" value="1"/>
</dbReference>
<dbReference type="Pfam" id="PF00231">
    <property type="entry name" value="ATP-synt"/>
    <property type="match status" value="1"/>
</dbReference>
<dbReference type="PRINTS" id="PR00126">
    <property type="entry name" value="ATPASEGAMMA"/>
</dbReference>
<dbReference type="SUPFAM" id="SSF52943">
    <property type="entry name" value="ATP synthase (F1-ATPase), gamma subunit"/>
    <property type="match status" value="1"/>
</dbReference>
<dbReference type="PROSITE" id="PS00153">
    <property type="entry name" value="ATPASE_GAMMA"/>
    <property type="match status" value="1"/>
</dbReference>
<sequence length="298" mass="32719">MPSLKEVQLKIKGVKQTKKITKAMNMVATSKLRGAQTNMEAFRPYAEKFAEVLGSLAAKAGEETSPLLVPKESVKRVNVVLCTSDRGLCGGFNTNLVRMANAYLKRCQEKEIEVSFTHFGKKGRDWCRKMTDCERKSEYLGVVGARFGFNVAVTAGRELINGFLNGDYDEVHVIYSEFQGMAKQLPVIRQLLPIPPIETADSPASDGGEDYLAEHICEPSPDEILDAMLPKNVFIQIYSALLETSTSEHAARMAAMDNASKACNDMINELTLLYNKARQAAITAELMDIVGGAEALKG</sequence>
<reference key="1">
    <citation type="submission" date="2007-10" db="EMBL/GenBank/DDBJ databases">
        <title>Complete sequence of Desulfococcus oleovorans Hxd3.</title>
        <authorList>
            <consortium name="US DOE Joint Genome Institute"/>
            <person name="Copeland A."/>
            <person name="Lucas S."/>
            <person name="Lapidus A."/>
            <person name="Barry K."/>
            <person name="Glavina del Rio T."/>
            <person name="Dalin E."/>
            <person name="Tice H."/>
            <person name="Pitluck S."/>
            <person name="Kiss H."/>
            <person name="Brettin T."/>
            <person name="Bruce D."/>
            <person name="Detter J.C."/>
            <person name="Han C."/>
            <person name="Schmutz J."/>
            <person name="Larimer F."/>
            <person name="Land M."/>
            <person name="Hauser L."/>
            <person name="Kyrpides N."/>
            <person name="Kim E."/>
            <person name="Wawrik B."/>
            <person name="Richardson P."/>
        </authorList>
    </citation>
    <scope>NUCLEOTIDE SEQUENCE [LARGE SCALE GENOMIC DNA]</scope>
    <source>
        <strain>DSM 6200 / JCM 39069 / Hxd3</strain>
    </source>
</reference>
<keyword id="KW-0066">ATP synthesis</keyword>
<keyword id="KW-0997">Cell inner membrane</keyword>
<keyword id="KW-1003">Cell membrane</keyword>
<keyword id="KW-0139">CF(1)</keyword>
<keyword id="KW-0375">Hydrogen ion transport</keyword>
<keyword id="KW-0406">Ion transport</keyword>
<keyword id="KW-0472">Membrane</keyword>
<keyword id="KW-1185">Reference proteome</keyword>
<keyword id="KW-0813">Transport</keyword>
<organism>
    <name type="scientific">Desulfosudis oleivorans (strain DSM 6200 / JCM 39069 / Hxd3)</name>
    <name type="common">Desulfococcus oleovorans</name>
    <dbReference type="NCBI Taxonomy" id="96561"/>
    <lineage>
        <taxon>Bacteria</taxon>
        <taxon>Pseudomonadati</taxon>
        <taxon>Thermodesulfobacteriota</taxon>
        <taxon>Desulfobacteria</taxon>
        <taxon>Desulfobacterales</taxon>
        <taxon>Desulfosudaceae</taxon>
        <taxon>Desulfosudis</taxon>
    </lineage>
</organism>
<comment type="function">
    <text evidence="1">Produces ATP from ADP in the presence of a proton gradient across the membrane. The gamma chain is believed to be important in regulating ATPase activity and the flow of protons through the CF(0) complex.</text>
</comment>
<comment type="subunit">
    <text evidence="1">F-type ATPases have 2 components, CF(1) - the catalytic core - and CF(0) - the membrane proton channel. CF(1) has five subunits: alpha(3), beta(3), gamma(1), delta(1), epsilon(1). CF(0) has three main subunits: a, b and c.</text>
</comment>
<comment type="subcellular location">
    <subcellularLocation>
        <location evidence="1">Cell inner membrane</location>
        <topology evidence="1">Peripheral membrane protein</topology>
    </subcellularLocation>
</comment>
<comment type="similarity">
    <text evidence="1">Belongs to the ATPase gamma chain family.</text>
</comment>
<gene>
    <name evidence="1" type="primary">atpG</name>
    <name type="ordered locus">Dole_0602</name>
</gene>